<proteinExistence type="evidence at protein level"/>
<organism>
    <name type="scientific">Homo sapiens</name>
    <name type="common">Human</name>
    <dbReference type="NCBI Taxonomy" id="9606"/>
    <lineage>
        <taxon>Eukaryota</taxon>
        <taxon>Metazoa</taxon>
        <taxon>Chordata</taxon>
        <taxon>Craniata</taxon>
        <taxon>Vertebrata</taxon>
        <taxon>Euteleostomi</taxon>
        <taxon>Mammalia</taxon>
        <taxon>Eutheria</taxon>
        <taxon>Euarchontoglires</taxon>
        <taxon>Primates</taxon>
        <taxon>Haplorrhini</taxon>
        <taxon>Catarrhini</taxon>
        <taxon>Hominidae</taxon>
        <taxon>Homo</taxon>
    </lineage>
</organism>
<name>MUC7_HUMAN</name>
<sequence length="377" mass="39159">MKTLPLFVCICALSACFSFSEGRERDHELRHRRHHHQSPKSHFELPHYPGLLAHQKPFIRKSYKCLHKRCRPKLPPSPNNPPKFPNPHQPPKHPDKNSSVVNPTLVATTQIPSVTFPSASTKITTLPNVTFLPQNATTISSRENVNTSSSVATLAPVNSPAPQDTTAAPPTPSATTPAPPSSSAPPETTAAPPTPSATTQAPPSSSAPPETTAAPPTPPATTPAPPSSSAPPETTAAPPTPSATTPAPLSSSAPPETTAVPPTPSATTLDPSSASAPPETTAAPPTPSATTPAPPSSPAPQETTAAPITTPNSSPTTLAPDTSETSAAPTHQTTTSVTTQTTTTKQPTSAPGQNKISRFLLYMKNLLNRIIDDMVEQ</sequence>
<keyword id="KW-1058">Asthma</keyword>
<keyword id="KW-0903">Direct protein sequencing</keyword>
<keyword id="KW-0325">Glycoprotein</keyword>
<keyword id="KW-1267">Proteomics identification</keyword>
<keyword id="KW-1185">Reference proteome</keyword>
<keyword id="KW-0677">Repeat</keyword>
<keyword id="KW-0964">Secreted</keyword>
<keyword id="KW-0732">Signal</keyword>
<feature type="signal peptide" evidence="1">
    <location>
        <begin position="1"/>
        <end position="22"/>
    </location>
</feature>
<feature type="chain" id="PRO_0000239228" description="Mucin-7">
    <location>
        <begin position="23"/>
        <end position="377"/>
    </location>
</feature>
<feature type="repeat" description="1">
    <location>
        <begin position="165"/>
        <end position="187"/>
    </location>
</feature>
<feature type="repeat" description="2">
    <location>
        <begin position="188"/>
        <end position="210"/>
    </location>
</feature>
<feature type="repeat" description="3">
    <location>
        <begin position="211"/>
        <end position="233"/>
    </location>
</feature>
<feature type="repeat" description="4">
    <location>
        <begin position="234"/>
        <end position="256"/>
    </location>
</feature>
<feature type="repeat" description="5">
    <location>
        <begin position="257"/>
        <end position="279"/>
    </location>
</feature>
<feature type="repeat" description="6">
    <location>
        <begin position="280"/>
        <end position="302"/>
    </location>
</feature>
<feature type="region of interest" description="Disordered" evidence="2">
    <location>
        <begin position="70"/>
        <end position="100"/>
    </location>
</feature>
<feature type="region of interest" description="Disordered" evidence="2">
    <location>
        <begin position="150"/>
        <end position="355"/>
    </location>
</feature>
<feature type="compositionally biased region" description="Pro residues" evidence="2">
    <location>
        <begin position="73"/>
        <end position="89"/>
    </location>
</feature>
<feature type="compositionally biased region" description="Pro residues" evidence="2">
    <location>
        <begin position="169"/>
        <end position="183"/>
    </location>
</feature>
<feature type="compositionally biased region" description="Low complexity" evidence="2">
    <location>
        <begin position="184"/>
        <end position="214"/>
    </location>
</feature>
<feature type="compositionally biased region" description="Pro residues" evidence="2">
    <location>
        <begin position="215"/>
        <end position="229"/>
    </location>
</feature>
<feature type="compositionally biased region" description="Low complexity" evidence="2">
    <location>
        <begin position="230"/>
        <end position="283"/>
    </location>
</feature>
<feature type="compositionally biased region" description="Pro residues" evidence="2">
    <location>
        <begin position="284"/>
        <end position="298"/>
    </location>
</feature>
<feature type="compositionally biased region" description="Polar residues" evidence="2">
    <location>
        <begin position="309"/>
        <end position="329"/>
    </location>
</feature>
<feature type="compositionally biased region" description="Low complexity" evidence="2">
    <location>
        <begin position="330"/>
        <end position="348"/>
    </location>
</feature>
<feature type="glycosylation site" description="N-linked (GlcNAc...) asparagine" evidence="1">
    <location>
        <position position="97"/>
    </location>
</feature>
<feature type="glycosylation site" description="N-linked (GlcNAc...) asparagine" evidence="1">
    <location>
        <position position="128"/>
    </location>
</feature>
<feature type="glycosylation site" description="N-linked (GlcNAc...) asparagine" evidence="1">
    <location>
        <position position="135"/>
    </location>
</feature>
<feature type="glycosylation site" description="N-linked (GlcNAc...) asparagine" evidence="1">
    <location>
        <position position="146"/>
    </location>
</feature>
<feature type="glycosylation site" description="O-linked (GalNAc) threonine; by GALNT13" evidence="4">
    <location>
        <position position="176"/>
    </location>
</feature>
<feature type="glycosylation site" description="O-linked (GalNAc) serine; by GALNT13" evidence="4">
    <location>
        <position position="182"/>
    </location>
</feature>
<feature type="glycosylation site" description="O-linked (GalNAc) serine; by GALNT13" evidence="4">
    <location>
        <position position="183"/>
    </location>
</feature>
<feature type="glycosylation site" description="O-linked (GalNAc) threonine; by GALNT13" evidence="4">
    <location>
        <position position="188"/>
    </location>
</feature>
<feature type="glycosylation site" description="O-linked (GalNAc) threonine; by GALNT13" evidence="4">
    <location>
        <position position="189"/>
    </location>
</feature>
<feature type="sequence variant" id="VAR_050451" description="In dbSNP:rs6826961.">
    <original>N</original>
    <variation>K</variation>
    <location>
        <position position="80"/>
    </location>
</feature>
<feature type="sequence conflict" description="In Ref. 4; AA sequence." evidence="8" ref="4">
    <original>C</original>
    <variation>S</variation>
    <location>
        <position position="70"/>
    </location>
</feature>
<feature type="sequence conflict" description="In Ref. 4; AA sequence." evidence="8" ref="4">
    <original>K</original>
    <variation>P</variation>
    <location>
        <position position="92"/>
    </location>
</feature>
<feature type="sequence conflict" description="In Ref. 4; AA sequence and 5; AA sequence." evidence="8" ref="4 5">
    <original>P</original>
    <variation>A</variation>
    <location>
        <position position="162"/>
    </location>
</feature>
<feature type="sequence conflict" description="In Ref. 3; AAH25688." evidence="8" ref="3">
    <original>T</original>
    <variation>I</variation>
    <location>
        <position position="334"/>
    </location>
</feature>
<protein>
    <recommendedName>
        <fullName>Mucin-7</fullName>
        <shortName>MUC-7</shortName>
    </recommendedName>
    <alternativeName>
        <fullName>Apo-MG2</fullName>
    </alternativeName>
    <alternativeName>
        <fullName>Salivary mucin-7</fullName>
    </alternativeName>
</protein>
<evidence type="ECO:0000255" key="1"/>
<evidence type="ECO:0000256" key="2">
    <source>
        <dbReference type="SAM" id="MobiDB-lite"/>
    </source>
</evidence>
<evidence type="ECO:0000269" key="3">
    <source>
    </source>
</evidence>
<evidence type="ECO:0000269" key="4">
    <source>
    </source>
</evidence>
<evidence type="ECO:0000269" key="5">
    <source>
    </source>
</evidence>
<evidence type="ECO:0000269" key="6">
    <source>
    </source>
</evidence>
<evidence type="ECO:0000269" key="7">
    <source>
    </source>
</evidence>
<evidence type="ECO:0000305" key="8"/>
<comment type="function">
    <text evidence="3 7">May function in a protective capacity by promoting the clearance of bacteria in the oral cavity and aiding in mastication, speech, and swallowing. Binds P.aeruginosa pili.</text>
</comment>
<comment type="subunit">
    <text>Monomer.</text>
</comment>
<comment type="interaction">
    <interactant intactId="EBI-738582">
        <id>Q8TAX7</id>
    </interactant>
    <interactant intactId="EBI-738586">
        <id>P04745</id>
        <label>AMY1C</label>
    </interactant>
    <organismsDiffer>false</organismsDiffer>
    <experiments>2</experiments>
</comment>
<comment type="interaction">
    <interactant intactId="EBI-738582">
        <id>Q8TAX7</id>
    </interactant>
    <interactant intactId="EBI-738638">
        <id>P15515</id>
        <label>HTN1</label>
    </interactant>
    <organismsDiffer>false</organismsDiffer>
    <experiments>2</experiments>
</comment>
<comment type="interaction">
    <interactant intactId="EBI-738582">
        <id>Q8TAX7</id>
    </interactant>
    <interactant intactId="EBI-738601">
        <id>P02810</id>
        <label>PRH2</label>
    </interactant>
    <organismsDiffer>false</organismsDiffer>
    <experiments>2</experiments>
</comment>
<comment type="interaction">
    <interactant intactId="EBI-738582">
        <id>Q8TAX7</id>
    </interactant>
    <interactant intactId="EBI-738687">
        <id>P02808</id>
        <label>STATH</label>
    </interactant>
    <organismsDiffer>false</organismsDiffer>
    <experiments>2</experiments>
</comment>
<comment type="subcellular location">
    <subcellularLocation>
        <location evidence="6">Secreted</location>
    </subcellularLocation>
</comment>
<comment type="tissue specificity">
    <text evidence="5 6">Expressed in salivary gland tissues and only in those that contain mucous acinar cells (e.g. sublingual and submandibular glands) and not in salivary glands containing only serous acinar cells (e.g. parotid gland).</text>
</comment>
<comment type="PTM">
    <text evidence="7">N- and O-glycosylated. Contains fucose, mannose, galactose, N-acetylglucosamine and N-acetylgalactosamine.</text>
</comment>
<comment type="polymorphism">
    <text>The most common allele, MUC7*6, contains a tandem repeat domain comprising 6 repeats (shown here) each composed of 23 amino acids. These repeats are very similar but not identical. In a large cohort of 375 individuals from a variety of ethnic backgrounds, three different alleles were detected, MUC7*6 being the most common, in all populations studied, followed by MUC7*5 (5 repeats), with frequency varying from 0.05 in Africans to 0.22 in East Asians. The MUC7*5 allele is less prevalent in patients with asthma than in controls, and seems to have a protective role in respiratory function. MUC7*8 (8 repeats), a novel rare allele, was identified in 1 Northern European individual.</text>
</comment>
<comment type="disease" evidence="3">
    <disease id="DI-02482">
        <name>Asthma</name>
        <acronym>ASTHMA</acronym>
        <description>The most common chronic disease affecting children and young adults. It is a complex genetic disorder with a heterogeneous phenotype, largely attributed to the interactions among many genes and between these genes and the environment. It is characterized by recurrent attacks of paroxysmal dyspnea, with wheezing due to spasmodic contraction of the bronchi.</description>
        <dbReference type="MIM" id="600807"/>
    </disease>
    <text>Disease susceptibility is associated with variants affecting the gene represented in this entry.</text>
</comment>
<comment type="online information" name="Mucin database">
    <link uri="http://www.medkem.gu.se/mucinbiology/databases/"/>
</comment>
<accession>Q8TAX7</accession>
<accession>Q9UCD7</accession>
<accession>Q9UCD8</accession>
<dbReference type="EMBL" id="AC106884">
    <property type="status" value="NOT_ANNOTATED_CDS"/>
    <property type="molecule type" value="Genomic_DNA"/>
</dbReference>
<dbReference type="EMBL" id="AC108518">
    <property type="status" value="NOT_ANNOTATED_CDS"/>
    <property type="molecule type" value="Genomic_DNA"/>
</dbReference>
<dbReference type="EMBL" id="BC025688">
    <property type="protein sequence ID" value="AAH25688.1"/>
    <property type="molecule type" value="mRNA"/>
</dbReference>
<dbReference type="CCDS" id="CCDS3541.1"/>
<dbReference type="PIR" id="A48018">
    <property type="entry name" value="A48018"/>
</dbReference>
<dbReference type="RefSeq" id="NP_001138478.1">
    <property type="nucleotide sequence ID" value="NM_001145006.2"/>
</dbReference>
<dbReference type="RefSeq" id="NP_001138479.1">
    <property type="nucleotide sequence ID" value="NM_001145007.2"/>
</dbReference>
<dbReference type="RefSeq" id="NP_689504.2">
    <property type="nucleotide sequence ID" value="NM_152291.3"/>
</dbReference>
<dbReference type="RefSeq" id="XP_047271679.1">
    <property type="nucleotide sequence ID" value="XM_047415723.1"/>
</dbReference>
<dbReference type="RefSeq" id="XP_054206070.1">
    <property type="nucleotide sequence ID" value="XM_054350095.1"/>
</dbReference>
<dbReference type="BMRB" id="Q8TAX7"/>
<dbReference type="SMR" id="Q8TAX7"/>
<dbReference type="BioGRID" id="110676">
    <property type="interactions" value="29"/>
</dbReference>
<dbReference type="FunCoup" id="Q8TAX7">
    <property type="interactions" value="93"/>
</dbReference>
<dbReference type="IntAct" id="Q8TAX7">
    <property type="interactions" value="30"/>
</dbReference>
<dbReference type="STRING" id="9606.ENSP00000407422"/>
<dbReference type="GlyConnect" id="418">
    <property type="glycosylation" value="14 O-Linked glycans"/>
</dbReference>
<dbReference type="GlyCosmos" id="Q8TAX7">
    <property type="glycosylation" value="9 sites, 21 glycans"/>
</dbReference>
<dbReference type="GlyGen" id="Q8TAX7">
    <property type="glycosylation" value="17 sites, 22 O-linked glycans (2 sites)"/>
</dbReference>
<dbReference type="iPTMnet" id="Q8TAX7"/>
<dbReference type="BioMuta" id="MUC7"/>
<dbReference type="DMDM" id="296439230"/>
<dbReference type="jPOST" id="Q8TAX7"/>
<dbReference type="MassIVE" id="Q8TAX7"/>
<dbReference type="PaxDb" id="9606-ENSP00000407422"/>
<dbReference type="PeptideAtlas" id="Q8TAX7"/>
<dbReference type="PRIDE" id="Q8TAX7"/>
<dbReference type="ProteomicsDB" id="73933"/>
<dbReference type="Antibodypedia" id="1459">
    <property type="antibodies" value="158 antibodies from 25 providers"/>
</dbReference>
<dbReference type="DNASU" id="4589"/>
<dbReference type="Ensembl" id="ENST00000304887.6">
    <property type="protein sequence ID" value="ENSP00000302021.5"/>
    <property type="gene ID" value="ENSG00000171195.11"/>
</dbReference>
<dbReference type="Ensembl" id="ENST00000413702.5">
    <property type="protein sequence ID" value="ENSP00000407422.1"/>
    <property type="gene ID" value="ENSG00000171195.11"/>
</dbReference>
<dbReference type="Ensembl" id="ENST00000456088.5">
    <property type="protein sequence ID" value="ENSP00000400585.1"/>
    <property type="gene ID" value="ENSG00000171195.11"/>
</dbReference>
<dbReference type="GeneID" id="4589"/>
<dbReference type="KEGG" id="hsa:4589"/>
<dbReference type="MANE-Select" id="ENST00000304887.6">
    <property type="protein sequence ID" value="ENSP00000302021.5"/>
    <property type="RefSeq nucleotide sequence ID" value="NM_152291.3"/>
    <property type="RefSeq protein sequence ID" value="NP_689504.2"/>
</dbReference>
<dbReference type="UCSC" id="uc003hfj.3">
    <property type="organism name" value="human"/>
</dbReference>
<dbReference type="AGR" id="HGNC:7518"/>
<dbReference type="CTD" id="4589"/>
<dbReference type="DisGeNET" id="4589"/>
<dbReference type="GeneCards" id="MUC7"/>
<dbReference type="HGNC" id="HGNC:7518">
    <property type="gene designation" value="MUC7"/>
</dbReference>
<dbReference type="HPA" id="ENSG00000171195">
    <property type="expression patterns" value="Tissue enriched (salivary)"/>
</dbReference>
<dbReference type="MalaCards" id="MUC7"/>
<dbReference type="MIM" id="158375">
    <property type="type" value="gene"/>
</dbReference>
<dbReference type="MIM" id="600807">
    <property type="type" value="phenotype"/>
</dbReference>
<dbReference type="neXtProt" id="NX_Q8TAX7"/>
<dbReference type="OpenTargets" id="ENSG00000171195"/>
<dbReference type="PharmGKB" id="PA31323"/>
<dbReference type="VEuPathDB" id="HostDB:ENSG00000171195"/>
<dbReference type="eggNOG" id="ENOG502QU51">
    <property type="taxonomic scope" value="Eukaryota"/>
</dbReference>
<dbReference type="GeneTree" id="ENSGT00730000111663"/>
<dbReference type="HOGENOM" id="CLU_063474_0_0_1"/>
<dbReference type="InParanoid" id="Q8TAX7"/>
<dbReference type="OMA" id="TTKERQC"/>
<dbReference type="OrthoDB" id="9751660at2759"/>
<dbReference type="PAN-GO" id="Q8TAX7">
    <property type="GO annotations" value="0 GO annotations based on evolutionary models"/>
</dbReference>
<dbReference type="PhylomeDB" id="Q8TAX7"/>
<dbReference type="TreeFam" id="TF341506"/>
<dbReference type="PathwayCommons" id="Q8TAX7"/>
<dbReference type="Reactome" id="R-HSA-5083625">
    <property type="pathway name" value="Defective GALNT3 causes HFTC"/>
</dbReference>
<dbReference type="Reactome" id="R-HSA-5083632">
    <property type="pathway name" value="Defective C1GALT1C1 causes TNPS"/>
</dbReference>
<dbReference type="Reactome" id="R-HSA-5083636">
    <property type="pathway name" value="Defective GALNT12 causes CRCS1"/>
</dbReference>
<dbReference type="Reactome" id="R-HSA-5621480">
    <property type="pathway name" value="Dectin-2 family"/>
</dbReference>
<dbReference type="Reactome" id="R-HSA-913709">
    <property type="pathway name" value="O-linked glycosylation of mucins"/>
</dbReference>
<dbReference type="Reactome" id="R-HSA-977068">
    <property type="pathway name" value="Termination of O-glycan biosynthesis"/>
</dbReference>
<dbReference type="SignaLink" id="Q8TAX7"/>
<dbReference type="BioGRID-ORCS" id="4589">
    <property type="hits" value="13 hits in 1120 CRISPR screens"/>
</dbReference>
<dbReference type="ChiTaRS" id="MUC7">
    <property type="organism name" value="human"/>
</dbReference>
<dbReference type="GeneWiki" id="MUC7"/>
<dbReference type="GenomeRNAi" id="4589"/>
<dbReference type="Pharos" id="Q8TAX7">
    <property type="development level" value="Tbio"/>
</dbReference>
<dbReference type="PRO" id="PR:Q8TAX7"/>
<dbReference type="Proteomes" id="UP000005640">
    <property type="component" value="Chromosome 4"/>
</dbReference>
<dbReference type="RNAct" id="Q8TAX7">
    <property type="molecule type" value="protein"/>
</dbReference>
<dbReference type="Bgee" id="ENSG00000171195">
    <property type="expression patterns" value="Expressed in trachea and 99 other cell types or tissues"/>
</dbReference>
<dbReference type="ExpressionAtlas" id="Q8TAX7">
    <property type="expression patterns" value="baseline and differential"/>
</dbReference>
<dbReference type="GO" id="GO:0070062">
    <property type="term" value="C:extracellular exosome"/>
    <property type="evidence" value="ECO:0007005"/>
    <property type="project" value="UniProtKB"/>
</dbReference>
<dbReference type="GO" id="GO:0005796">
    <property type="term" value="C:Golgi lumen"/>
    <property type="evidence" value="ECO:0000304"/>
    <property type="project" value="Reactome"/>
</dbReference>
<dbReference type="GO" id="GO:0005886">
    <property type="term" value="C:plasma membrane"/>
    <property type="evidence" value="ECO:0000304"/>
    <property type="project" value="Reactome"/>
</dbReference>
<dbReference type="GO" id="GO:0061844">
    <property type="term" value="P:antimicrobial humoral immune response mediated by antimicrobial peptide"/>
    <property type="evidence" value="ECO:0000314"/>
    <property type="project" value="UniProtKB"/>
</dbReference>
<dbReference type="GO" id="GO:0031640">
    <property type="term" value="P:killing of cells of another organism"/>
    <property type="evidence" value="ECO:0000314"/>
    <property type="project" value="UniProtKB"/>
</dbReference>
<dbReference type="InterPro" id="IPR033529">
    <property type="entry name" value="MUC7"/>
</dbReference>
<dbReference type="PANTHER" id="PTHR41683">
    <property type="entry name" value="MUCIN-7"/>
    <property type="match status" value="1"/>
</dbReference>
<dbReference type="PANTHER" id="PTHR41683:SF1">
    <property type="entry name" value="MUCIN-7"/>
    <property type="match status" value="1"/>
</dbReference>
<gene>
    <name type="primary">MUC7</name>
    <name type="synonym">MG2</name>
</gene>
<reference key="1">
    <citation type="journal article" date="1993" name="J. Biol. Chem.">
        <title>Molecular cloning, sequence, and specificity of expression of the gene encoding the low molecular weight human salivary mucin (MUC7).</title>
        <authorList>
            <person name="Bobek L.A."/>
            <person name="Tsai H."/>
            <person name="Biesbrock A.R."/>
            <person name="Levine M.J."/>
        </authorList>
    </citation>
    <scope>NUCLEOTIDE SEQUENCE [MRNA]</scope>
    <scope>SUBCELLULAR LOCATION</scope>
    <scope>TISSUE SPECIFICITY</scope>
    <source>
        <tissue>Submandibular gland</tissue>
    </source>
</reference>
<reference key="2">
    <citation type="journal article" date="2005" name="Nature">
        <title>Generation and annotation of the DNA sequences of human chromosomes 2 and 4.</title>
        <authorList>
            <person name="Hillier L.W."/>
            <person name="Graves T.A."/>
            <person name="Fulton R.S."/>
            <person name="Fulton L.A."/>
            <person name="Pepin K.H."/>
            <person name="Minx P."/>
            <person name="Wagner-McPherson C."/>
            <person name="Layman D."/>
            <person name="Wylie K."/>
            <person name="Sekhon M."/>
            <person name="Becker M.C."/>
            <person name="Fewell G.A."/>
            <person name="Delehaunty K.D."/>
            <person name="Miner T.L."/>
            <person name="Nash W.E."/>
            <person name="Kremitzki C."/>
            <person name="Oddy L."/>
            <person name="Du H."/>
            <person name="Sun H."/>
            <person name="Bradshaw-Cordum H."/>
            <person name="Ali J."/>
            <person name="Carter J."/>
            <person name="Cordes M."/>
            <person name="Harris A."/>
            <person name="Isak A."/>
            <person name="van Brunt A."/>
            <person name="Nguyen C."/>
            <person name="Du F."/>
            <person name="Courtney L."/>
            <person name="Kalicki J."/>
            <person name="Ozersky P."/>
            <person name="Abbott S."/>
            <person name="Armstrong J."/>
            <person name="Belter E.A."/>
            <person name="Caruso L."/>
            <person name="Cedroni M."/>
            <person name="Cotton M."/>
            <person name="Davidson T."/>
            <person name="Desai A."/>
            <person name="Elliott G."/>
            <person name="Erb T."/>
            <person name="Fronick C."/>
            <person name="Gaige T."/>
            <person name="Haakenson W."/>
            <person name="Haglund K."/>
            <person name="Holmes A."/>
            <person name="Harkins R."/>
            <person name="Kim K."/>
            <person name="Kruchowski S.S."/>
            <person name="Strong C.M."/>
            <person name="Grewal N."/>
            <person name="Goyea E."/>
            <person name="Hou S."/>
            <person name="Levy A."/>
            <person name="Martinka S."/>
            <person name="Mead K."/>
            <person name="McLellan M.D."/>
            <person name="Meyer R."/>
            <person name="Randall-Maher J."/>
            <person name="Tomlinson C."/>
            <person name="Dauphin-Kohlberg S."/>
            <person name="Kozlowicz-Reilly A."/>
            <person name="Shah N."/>
            <person name="Swearengen-Shahid S."/>
            <person name="Snider J."/>
            <person name="Strong J.T."/>
            <person name="Thompson J."/>
            <person name="Yoakum M."/>
            <person name="Leonard S."/>
            <person name="Pearman C."/>
            <person name="Trani L."/>
            <person name="Radionenko M."/>
            <person name="Waligorski J.E."/>
            <person name="Wang C."/>
            <person name="Rock S.M."/>
            <person name="Tin-Wollam A.-M."/>
            <person name="Maupin R."/>
            <person name="Latreille P."/>
            <person name="Wendl M.C."/>
            <person name="Yang S.-P."/>
            <person name="Pohl C."/>
            <person name="Wallis J.W."/>
            <person name="Spieth J."/>
            <person name="Bieri T.A."/>
            <person name="Berkowicz N."/>
            <person name="Nelson J.O."/>
            <person name="Osborne J."/>
            <person name="Ding L."/>
            <person name="Meyer R."/>
            <person name="Sabo A."/>
            <person name="Shotland Y."/>
            <person name="Sinha P."/>
            <person name="Wohldmann P.E."/>
            <person name="Cook L.L."/>
            <person name="Hickenbotham M.T."/>
            <person name="Eldred J."/>
            <person name="Williams D."/>
            <person name="Jones T.A."/>
            <person name="She X."/>
            <person name="Ciccarelli F.D."/>
            <person name="Izaurralde E."/>
            <person name="Taylor J."/>
            <person name="Schmutz J."/>
            <person name="Myers R.M."/>
            <person name="Cox D.R."/>
            <person name="Huang X."/>
            <person name="McPherson J.D."/>
            <person name="Mardis E.R."/>
            <person name="Clifton S.W."/>
            <person name="Warren W.C."/>
            <person name="Chinwalla A.T."/>
            <person name="Eddy S.R."/>
            <person name="Marra M.A."/>
            <person name="Ovcharenko I."/>
            <person name="Furey T.S."/>
            <person name="Miller W."/>
            <person name="Eichler E.E."/>
            <person name="Bork P."/>
            <person name="Suyama M."/>
            <person name="Torrents D."/>
            <person name="Waterston R.H."/>
            <person name="Wilson R.K."/>
        </authorList>
    </citation>
    <scope>NUCLEOTIDE SEQUENCE [LARGE SCALE GENOMIC DNA]</scope>
</reference>
<reference key="3">
    <citation type="journal article" date="2004" name="Genome Res.">
        <title>The status, quality, and expansion of the NIH full-length cDNA project: the Mammalian Gene Collection (MGC).</title>
        <authorList>
            <consortium name="The MGC Project Team"/>
        </authorList>
    </citation>
    <scope>NUCLEOTIDE SEQUENCE [LARGE SCALE MRNA]</scope>
    <source>
        <tissue>Lung</tissue>
    </source>
</reference>
<reference key="4">
    <citation type="journal article" date="1992" name="Biochem. J.">
        <title>Structural features of the low-molecular-mass human salivary mucin.</title>
        <authorList>
            <person name="Reddy M.S."/>
            <person name="Bobek L.A."/>
            <person name="Haraszthy G.G."/>
            <person name="Biesbrock A.R."/>
            <person name="Levine M.J."/>
        </authorList>
    </citation>
    <scope>PROTEIN SEQUENCE OF 70-92 AND 143-168</scope>
    <scope>TISSUE SPECIFICITY</scope>
    <source>
        <tissue>Saliva</tissue>
    </source>
</reference>
<reference key="5">
    <citation type="journal article" date="1993" name="Crit. Rev. Oral Biol. Med.">
        <title>Low-molecular-mass human salivary mucin, MG2: structure and binding of Pseudomonas aeruginosa.</title>
        <authorList>
            <person name="Reddy M.S."/>
            <person name="Levine M.J."/>
            <person name="Paranchych W."/>
        </authorList>
    </citation>
    <scope>PROTEIN SEQUENCE OF 93-112 AND 143-168</scope>
    <scope>FUNCTION</scope>
    <scope>GLYCOSYLATION</scope>
    <source>
        <tissue>Saliva</tissue>
    </source>
</reference>
<reference key="6">
    <citation type="journal article" date="2001" name="Eur. J. Hum. Genet.">
        <title>Genetic polymorphism of MUC7: allele frequencies and association with asthma.</title>
        <authorList>
            <person name="Kirkbride H.J."/>
            <person name="Bolscher J.G."/>
            <person name="Nazmi K."/>
            <person name="Vinall L.E."/>
            <person name="Nash M.W."/>
            <person name="Moss F.M."/>
            <person name="Mitchell D.M."/>
            <person name="Swallow D.M."/>
        </authorList>
    </citation>
    <scope>FUNCTION</scope>
    <scope>POLYMORPHISM</scope>
    <scope>INVOLVEMENT IN SUSCEPTIBILITY TO ASTHMA</scope>
</reference>
<reference key="7">
    <citation type="journal article" date="2003" name="J. Biol. Chem.">
        <title>Cloning and characterization of a new human UDP-N-acetyl-alpha-D-galactosamine:polypeptide N-acetylgalactosaminyltransferase, designated pp-GalNAc-T13, that is specifically expressed in neurons and synthesizes GalNAc alpha-serine/threonine antigen.</title>
        <authorList>
            <person name="Zhang Y."/>
            <person name="Iwasaki H."/>
            <person name="Wang H."/>
            <person name="Kudo T."/>
            <person name="Kalka T.B."/>
            <person name="Hennet T."/>
            <person name="Kubota T."/>
            <person name="Cheng L."/>
            <person name="Inaba N."/>
            <person name="Gotoh M."/>
            <person name="Togayachi A."/>
            <person name="Guo J.-M."/>
            <person name="Hisatomi H."/>
            <person name="Nakajima K."/>
            <person name="Nishihara S."/>
            <person name="Nakamura M."/>
            <person name="Marth J.D."/>
            <person name="Narimatsu H."/>
        </authorList>
    </citation>
    <scope>GLYCOSYLATION AT THR-176; SER-182; SER-183; THR-188 AND THR-189</scope>
</reference>